<name>Y2896_SHEFN</name>
<protein>
    <recommendedName>
        <fullName evidence="1">UPF0246 protein Sfri_2896</fullName>
    </recommendedName>
</protein>
<sequence>MLVLVSPAKTLDFENPPITNTHTQPCLLKQSQTLIDVCRELTPMDIASLMKVSDKIAGLNAARFADWQPPFTLDNAKQAIFAFRGDVYTGFDADHLSESQMASSQKHLRILSGLYGLLKPLDLIQPYRLEMGTKLTNPQGRNLYAFWGETITAEVNKALKEQGDDIIVNLASNEYFKSVNVKQLEGQLITPVFKDCKKGQFKVISFYAKKARGLMARYIVDTKPTSVEQLTAFDLEGYYYNEAQSTPTAPVFLRDEQK</sequence>
<keyword id="KW-1185">Reference proteome</keyword>
<dbReference type="EMBL" id="CP000447">
    <property type="protein sequence ID" value="ABI72735.1"/>
    <property type="molecule type" value="Genomic_DNA"/>
</dbReference>
<dbReference type="RefSeq" id="WP_011638344.1">
    <property type="nucleotide sequence ID" value="NC_008345.1"/>
</dbReference>
<dbReference type="SMR" id="Q07Z29"/>
<dbReference type="STRING" id="318167.Sfri_2896"/>
<dbReference type="KEGG" id="sfr:Sfri_2896"/>
<dbReference type="eggNOG" id="COG3022">
    <property type="taxonomic scope" value="Bacteria"/>
</dbReference>
<dbReference type="HOGENOM" id="CLU_061989_0_0_6"/>
<dbReference type="OrthoDB" id="9777133at2"/>
<dbReference type="Proteomes" id="UP000000684">
    <property type="component" value="Chromosome"/>
</dbReference>
<dbReference type="GO" id="GO:0005829">
    <property type="term" value="C:cytosol"/>
    <property type="evidence" value="ECO:0007669"/>
    <property type="project" value="TreeGrafter"/>
</dbReference>
<dbReference type="GO" id="GO:0033194">
    <property type="term" value="P:response to hydroperoxide"/>
    <property type="evidence" value="ECO:0007669"/>
    <property type="project" value="TreeGrafter"/>
</dbReference>
<dbReference type="HAMAP" id="MF_00652">
    <property type="entry name" value="UPF0246"/>
    <property type="match status" value="1"/>
</dbReference>
<dbReference type="InterPro" id="IPR005583">
    <property type="entry name" value="YaaA"/>
</dbReference>
<dbReference type="NCBIfam" id="NF002541">
    <property type="entry name" value="PRK02101.1-1"/>
    <property type="match status" value="1"/>
</dbReference>
<dbReference type="NCBIfam" id="NF002542">
    <property type="entry name" value="PRK02101.1-3"/>
    <property type="match status" value="1"/>
</dbReference>
<dbReference type="PANTHER" id="PTHR30283:SF4">
    <property type="entry name" value="PEROXIDE STRESS RESISTANCE PROTEIN YAAA"/>
    <property type="match status" value="1"/>
</dbReference>
<dbReference type="PANTHER" id="PTHR30283">
    <property type="entry name" value="PEROXIDE STRESS RESPONSE PROTEIN YAAA"/>
    <property type="match status" value="1"/>
</dbReference>
<dbReference type="Pfam" id="PF03883">
    <property type="entry name" value="H2O2_YaaD"/>
    <property type="match status" value="1"/>
</dbReference>
<comment type="similarity">
    <text evidence="1">Belongs to the UPF0246 family.</text>
</comment>
<evidence type="ECO:0000255" key="1">
    <source>
        <dbReference type="HAMAP-Rule" id="MF_00652"/>
    </source>
</evidence>
<reference key="1">
    <citation type="submission" date="2006-08" db="EMBL/GenBank/DDBJ databases">
        <title>Complete sequence of Shewanella frigidimarina NCIMB 400.</title>
        <authorList>
            <consortium name="US DOE Joint Genome Institute"/>
            <person name="Copeland A."/>
            <person name="Lucas S."/>
            <person name="Lapidus A."/>
            <person name="Barry K."/>
            <person name="Detter J.C."/>
            <person name="Glavina del Rio T."/>
            <person name="Hammon N."/>
            <person name="Israni S."/>
            <person name="Dalin E."/>
            <person name="Tice H."/>
            <person name="Pitluck S."/>
            <person name="Fredrickson J.K."/>
            <person name="Kolker E."/>
            <person name="McCuel L.A."/>
            <person name="DiChristina T."/>
            <person name="Nealson K.H."/>
            <person name="Newman D."/>
            <person name="Tiedje J.M."/>
            <person name="Zhou J."/>
            <person name="Romine M.F."/>
            <person name="Culley D.E."/>
            <person name="Serres M."/>
            <person name="Chertkov O."/>
            <person name="Brettin T."/>
            <person name="Bruce D."/>
            <person name="Han C."/>
            <person name="Tapia R."/>
            <person name="Gilna P."/>
            <person name="Schmutz J."/>
            <person name="Larimer F."/>
            <person name="Land M."/>
            <person name="Hauser L."/>
            <person name="Kyrpides N."/>
            <person name="Mikhailova N."/>
            <person name="Richardson P."/>
        </authorList>
    </citation>
    <scope>NUCLEOTIDE SEQUENCE [LARGE SCALE GENOMIC DNA]</scope>
    <source>
        <strain>NCIMB 400</strain>
    </source>
</reference>
<accession>Q07Z29</accession>
<feature type="chain" id="PRO_0000262057" description="UPF0246 protein Sfri_2896">
    <location>
        <begin position="1"/>
        <end position="258"/>
    </location>
</feature>
<proteinExistence type="inferred from homology"/>
<gene>
    <name type="ordered locus">Sfri_2896</name>
</gene>
<organism>
    <name type="scientific">Shewanella frigidimarina (strain NCIMB 400)</name>
    <dbReference type="NCBI Taxonomy" id="318167"/>
    <lineage>
        <taxon>Bacteria</taxon>
        <taxon>Pseudomonadati</taxon>
        <taxon>Pseudomonadota</taxon>
        <taxon>Gammaproteobacteria</taxon>
        <taxon>Alteromonadales</taxon>
        <taxon>Shewanellaceae</taxon>
        <taxon>Shewanella</taxon>
    </lineage>
</organism>